<feature type="chain" id="PRO_0000066808" description="Toxin To46">
    <location>
        <begin position="1"/>
        <end position="10" status="greater than"/>
    </location>
</feature>
<feature type="modified residue" description="Phosphoserine" evidence="2">
    <location>
        <position position="8"/>
    </location>
</feature>
<feature type="non-terminal residue" evidence="3">
    <location>
        <position position="10"/>
    </location>
</feature>
<evidence type="ECO:0000269" key="1">
    <source>
    </source>
</evidence>
<evidence type="ECO:0000269" key="2">
    <source>
    </source>
</evidence>
<evidence type="ECO:0000303" key="3">
    <source>
    </source>
</evidence>
<evidence type="ECO:0000305" key="4"/>
<name>SC46_TITOB</name>
<dbReference type="iPTMnet" id="P84686"/>
<dbReference type="GO" id="GO:0005576">
    <property type="term" value="C:extracellular region"/>
    <property type="evidence" value="ECO:0007005"/>
    <property type="project" value="UniProtKB"/>
</dbReference>
<dbReference type="GO" id="GO:0090729">
    <property type="term" value="F:toxin activity"/>
    <property type="evidence" value="ECO:0007669"/>
    <property type="project" value="UniProtKB-KW"/>
</dbReference>
<proteinExistence type="evidence at protein level"/>
<reference evidence="4" key="1">
    <citation type="journal article" date="2004" name="J. Chromatogr. B">
        <title>Proteomics of the venom from the Amazonian scorpion Tityus cambridgei and the role of prolines on mass spectrometry analysis of toxins.</title>
        <authorList>
            <person name="Batista C.V.F."/>
            <person name="del Pozo L."/>
            <person name="Zamudio F.Z."/>
            <person name="Contreras S."/>
            <person name="Becerril B."/>
            <person name="Wanke E."/>
            <person name="Possani L.D."/>
        </authorList>
    </citation>
    <scope>PROTEIN SEQUENCE</scope>
    <scope>SUBCELLULAR LOCATION</scope>
    <scope>TISSUE SPECIFICITY</scope>
    <scope>MASS SPECTROMETRY</scope>
    <source>
        <tissue evidence="1">Venom</tissue>
    </source>
</reference>
<reference key="2">
    <citation type="journal article" date="2013" name="J. Proteome Res.">
        <title>Moving pieces in a venomic puzzle: unveiling post-translationally modified toxins from Tityus serrulatus.</title>
        <authorList>
            <person name="Verano-Braga T."/>
            <person name="Dutra A.A."/>
            <person name="Leon I.R."/>
            <person name="Melo-Braga M.N."/>
            <person name="Roepstorff P."/>
            <person name="Pimenta A.M."/>
            <person name="Kjeldsen F."/>
        </authorList>
    </citation>
    <scope>PROTEIN SEQUENCE OF 1-9</scope>
    <scope>IDENTIFICATION BY MASS SPECTROMETRY</scope>
    <scope>PHOSPHORYLATION AT SER-8</scope>
</reference>
<accession>P84686</accession>
<sequence>KEGYLFGSRG</sequence>
<organism>
    <name type="scientific">Tityus obscurus</name>
    <name type="common">Amazonian scorpion</name>
    <name type="synonym">Tityus cambridgei</name>
    <dbReference type="NCBI Taxonomy" id="1221240"/>
    <lineage>
        <taxon>Eukaryota</taxon>
        <taxon>Metazoa</taxon>
        <taxon>Ecdysozoa</taxon>
        <taxon>Arthropoda</taxon>
        <taxon>Chelicerata</taxon>
        <taxon>Arachnida</taxon>
        <taxon>Scorpiones</taxon>
        <taxon>Buthida</taxon>
        <taxon>Buthoidea</taxon>
        <taxon>Buthidae</taxon>
        <taxon>Tityus</taxon>
    </lineage>
</organism>
<keyword id="KW-0903">Direct protein sequencing</keyword>
<keyword id="KW-0597">Phosphoprotein</keyword>
<keyword id="KW-0964">Secreted</keyword>
<keyword id="KW-0800">Toxin</keyword>
<protein>
    <recommendedName>
        <fullName>Toxin To46</fullName>
    </recommendedName>
    <alternativeName>
        <fullName>Toxin Tc46</fullName>
    </alternativeName>
</protein>
<comment type="subcellular location">
    <subcellularLocation>
        <location evidence="1">Secreted</location>
    </subcellularLocation>
</comment>
<comment type="tissue specificity">
    <text evidence="1">Expressed by the venom gland.</text>
</comment>
<comment type="mass spectrometry"/>